<reference key="1">
    <citation type="journal article" date="2007" name="Genome Biol.">
        <title>Comparison of Francisella tularensis genomes reveals evolutionary events associated with the emergence of human pathogenic strains.</title>
        <authorList>
            <person name="Rohmer L."/>
            <person name="Fong C."/>
            <person name="Abmayr S."/>
            <person name="Wasnick M."/>
            <person name="Larson Freeman T.J."/>
            <person name="Radey M."/>
            <person name="Guina T."/>
            <person name="Svensson K."/>
            <person name="Hayden H.S."/>
            <person name="Jacobs M."/>
            <person name="Gallagher L.A."/>
            <person name="Manoil C."/>
            <person name="Ernst R.K."/>
            <person name="Drees B."/>
            <person name="Buckley D."/>
            <person name="Haugen E."/>
            <person name="Bovee D."/>
            <person name="Zhou Y."/>
            <person name="Chang J."/>
            <person name="Levy R."/>
            <person name="Lim R."/>
            <person name="Gillett W."/>
            <person name="Guenthener D."/>
            <person name="Kang A."/>
            <person name="Shaffer S.A."/>
            <person name="Taylor G."/>
            <person name="Chen J."/>
            <person name="Gallis B."/>
            <person name="D'Argenio D.A."/>
            <person name="Forsman M."/>
            <person name="Olson M.V."/>
            <person name="Goodlett D.R."/>
            <person name="Kaul R."/>
            <person name="Miller S.I."/>
            <person name="Brittnacher M.J."/>
        </authorList>
    </citation>
    <scope>NUCLEOTIDE SEQUENCE [LARGE SCALE GENOMIC DNA]</scope>
    <source>
        <strain>U112</strain>
    </source>
</reference>
<keyword id="KW-0131">Cell cycle</keyword>
<keyword id="KW-0132">Cell division</keyword>
<keyword id="KW-0143">Chaperone</keyword>
<keyword id="KW-0963">Cytoplasm</keyword>
<keyword id="KW-0413">Isomerase</keyword>
<keyword id="KW-0697">Rotamase</keyword>
<gene>
    <name evidence="1" type="primary">tig</name>
    <name type="ordered locus">FTN_1058</name>
</gene>
<accession>A0Q6T0</accession>
<organism>
    <name type="scientific">Francisella tularensis subsp. novicida (strain U112)</name>
    <dbReference type="NCBI Taxonomy" id="401614"/>
    <lineage>
        <taxon>Bacteria</taxon>
        <taxon>Pseudomonadati</taxon>
        <taxon>Pseudomonadota</taxon>
        <taxon>Gammaproteobacteria</taxon>
        <taxon>Thiotrichales</taxon>
        <taxon>Francisellaceae</taxon>
        <taxon>Francisella</taxon>
    </lineage>
</organism>
<name>TIG_FRATN</name>
<evidence type="ECO:0000255" key="1">
    <source>
        <dbReference type="HAMAP-Rule" id="MF_00303"/>
    </source>
</evidence>
<comment type="function">
    <text evidence="1">Involved in protein export. Acts as a chaperone by maintaining the newly synthesized protein in an open conformation. Functions as a peptidyl-prolyl cis-trans isomerase.</text>
</comment>
<comment type="catalytic activity">
    <reaction evidence="1">
        <text>[protein]-peptidylproline (omega=180) = [protein]-peptidylproline (omega=0)</text>
        <dbReference type="Rhea" id="RHEA:16237"/>
        <dbReference type="Rhea" id="RHEA-COMP:10747"/>
        <dbReference type="Rhea" id="RHEA-COMP:10748"/>
        <dbReference type="ChEBI" id="CHEBI:83833"/>
        <dbReference type="ChEBI" id="CHEBI:83834"/>
        <dbReference type="EC" id="5.2.1.8"/>
    </reaction>
</comment>
<comment type="subcellular location">
    <subcellularLocation>
        <location>Cytoplasm</location>
    </subcellularLocation>
    <text evidence="1">About half TF is bound to the ribosome near the polypeptide exit tunnel while the other half is free in the cytoplasm.</text>
</comment>
<comment type="domain">
    <text evidence="1">Consists of 3 domains; the N-terminus binds the ribosome, the middle domain has PPIase activity, while the C-terminus has intrinsic chaperone activity on its own.</text>
</comment>
<comment type="similarity">
    <text evidence="1">Belongs to the FKBP-type PPIase family. Tig subfamily.</text>
</comment>
<dbReference type="EC" id="5.2.1.8" evidence="1"/>
<dbReference type="EMBL" id="CP000439">
    <property type="protein sequence ID" value="ABK89945.1"/>
    <property type="molecule type" value="Genomic_DNA"/>
</dbReference>
<dbReference type="RefSeq" id="WP_003039621.1">
    <property type="nucleotide sequence ID" value="NC_008601.1"/>
</dbReference>
<dbReference type="SMR" id="A0Q6T0"/>
<dbReference type="KEGG" id="ftn:FTN_1058"/>
<dbReference type="KEGG" id="ftx:AW25_950"/>
<dbReference type="BioCyc" id="FTUL401614:G1G75-1101-MONOMER"/>
<dbReference type="Proteomes" id="UP000000762">
    <property type="component" value="Chromosome"/>
</dbReference>
<dbReference type="GO" id="GO:0005737">
    <property type="term" value="C:cytoplasm"/>
    <property type="evidence" value="ECO:0007669"/>
    <property type="project" value="UniProtKB-SubCell"/>
</dbReference>
<dbReference type="GO" id="GO:0003755">
    <property type="term" value="F:peptidyl-prolyl cis-trans isomerase activity"/>
    <property type="evidence" value="ECO:0007669"/>
    <property type="project" value="UniProtKB-UniRule"/>
</dbReference>
<dbReference type="GO" id="GO:0044183">
    <property type="term" value="F:protein folding chaperone"/>
    <property type="evidence" value="ECO:0007669"/>
    <property type="project" value="TreeGrafter"/>
</dbReference>
<dbReference type="GO" id="GO:0043022">
    <property type="term" value="F:ribosome binding"/>
    <property type="evidence" value="ECO:0007669"/>
    <property type="project" value="TreeGrafter"/>
</dbReference>
<dbReference type="GO" id="GO:0051083">
    <property type="term" value="P:'de novo' cotranslational protein folding"/>
    <property type="evidence" value="ECO:0007669"/>
    <property type="project" value="TreeGrafter"/>
</dbReference>
<dbReference type="GO" id="GO:0051301">
    <property type="term" value="P:cell division"/>
    <property type="evidence" value="ECO:0007669"/>
    <property type="project" value="UniProtKB-KW"/>
</dbReference>
<dbReference type="GO" id="GO:0061077">
    <property type="term" value="P:chaperone-mediated protein folding"/>
    <property type="evidence" value="ECO:0007669"/>
    <property type="project" value="TreeGrafter"/>
</dbReference>
<dbReference type="GO" id="GO:0015031">
    <property type="term" value="P:protein transport"/>
    <property type="evidence" value="ECO:0007669"/>
    <property type="project" value="UniProtKB-UniRule"/>
</dbReference>
<dbReference type="GO" id="GO:0043335">
    <property type="term" value="P:protein unfolding"/>
    <property type="evidence" value="ECO:0007669"/>
    <property type="project" value="TreeGrafter"/>
</dbReference>
<dbReference type="FunFam" id="3.10.50.40:FF:000001">
    <property type="entry name" value="Trigger factor"/>
    <property type="match status" value="1"/>
</dbReference>
<dbReference type="Gene3D" id="3.10.50.40">
    <property type="match status" value="1"/>
</dbReference>
<dbReference type="Gene3D" id="3.30.70.1050">
    <property type="entry name" value="Trigger factor ribosome-binding domain"/>
    <property type="match status" value="1"/>
</dbReference>
<dbReference type="Gene3D" id="1.10.3120.10">
    <property type="entry name" value="Trigger factor, C-terminal domain"/>
    <property type="match status" value="1"/>
</dbReference>
<dbReference type="HAMAP" id="MF_00303">
    <property type="entry name" value="Trigger_factor_Tig"/>
    <property type="match status" value="1"/>
</dbReference>
<dbReference type="InterPro" id="IPR046357">
    <property type="entry name" value="PPIase_dom_sf"/>
</dbReference>
<dbReference type="InterPro" id="IPR001179">
    <property type="entry name" value="PPIase_FKBP_dom"/>
</dbReference>
<dbReference type="InterPro" id="IPR005215">
    <property type="entry name" value="Trig_fac"/>
</dbReference>
<dbReference type="InterPro" id="IPR008880">
    <property type="entry name" value="Trigger_fac_C"/>
</dbReference>
<dbReference type="InterPro" id="IPR037041">
    <property type="entry name" value="Trigger_fac_C_sf"/>
</dbReference>
<dbReference type="InterPro" id="IPR008881">
    <property type="entry name" value="Trigger_fac_ribosome-bd_bac"/>
</dbReference>
<dbReference type="InterPro" id="IPR036611">
    <property type="entry name" value="Trigger_fac_ribosome-bd_sf"/>
</dbReference>
<dbReference type="InterPro" id="IPR027304">
    <property type="entry name" value="Trigger_fact/SurA_dom_sf"/>
</dbReference>
<dbReference type="NCBIfam" id="TIGR00115">
    <property type="entry name" value="tig"/>
    <property type="match status" value="1"/>
</dbReference>
<dbReference type="PANTHER" id="PTHR30560">
    <property type="entry name" value="TRIGGER FACTOR CHAPERONE AND PEPTIDYL-PROLYL CIS/TRANS ISOMERASE"/>
    <property type="match status" value="1"/>
</dbReference>
<dbReference type="PANTHER" id="PTHR30560:SF3">
    <property type="entry name" value="TRIGGER FACTOR-LIKE PROTEIN TIG, CHLOROPLASTIC"/>
    <property type="match status" value="1"/>
</dbReference>
<dbReference type="Pfam" id="PF00254">
    <property type="entry name" value="FKBP_C"/>
    <property type="match status" value="1"/>
</dbReference>
<dbReference type="Pfam" id="PF05698">
    <property type="entry name" value="Trigger_C"/>
    <property type="match status" value="1"/>
</dbReference>
<dbReference type="Pfam" id="PF05697">
    <property type="entry name" value="Trigger_N"/>
    <property type="match status" value="1"/>
</dbReference>
<dbReference type="PIRSF" id="PIRSF003095">
    <property type="entry name" value="Trigger_factor"/>
    <property type="match status" value="1"/>
</dbReference>
<dbReference type="SUPFAM" id="SSF54534">
    <property type="entry name" value="FKBP-like"/>
    <property type="match status" value="1"/>
</dbReference>
<dbReference type="SUPFAM" id="SSF109998">
    <property type="entry name" value="Triger factor/SurA peptide-binding domain-like"/>
    <property type="match status" value="1"/>
</dbReference>
<dbReference type="SUPFAM" id="SSF102735">
    <property type="entry name" value="Trigger factor ribosome-binding domain"/>
    <property type="match status" value="1"/>
</dbReference>
<dbReference type="PROSITE" id="PS50059">
    <property type="entry name" value="FKBP_PPIASE"/>
    <property type="match status" value="1"/>
</dbReference>
<protein>
    <recommendedName>
        <fullName evidence="1">Trigger factor</fullName>
        <shortName evidence="1">TF</shortName>
        <ecNumber evidence="1">5.2.1.8</ecNumber>
    </recommendedName>
    <alternativeName>
        <fullName evidence="1">PPIase</fullName>
    </alternativeName>
</protein>
<proteinExistence type="inferred from homology"/>
<feature type="chain" id="PRO_1000022681" description="Trigger factor">
    <location>
        <begin position="1"/>
        <end position="438"/>
    </location>
</feature>
<feature type="domain" description="PPIase FKBP-type" evidence="1">
    <location>
        <begin position="160"/>
        <end position="245"/>
    </location>
</feature>
<sequence length="438" mass="49502">MQVTVEKKEGIHCSLLIEVPANEIDSVVSKEINRTAKTIKMDGFRPGKVPAGMVKKKYGEQIRMEVISDLIPQKYSKAIQDEKLAVAGIEVELKENKEGQPLKFVANLELFPEFEVTGFEKIEVQKPVVELTDKEVKQMIENLRKQFATFSEVDKAVEKDDKVTIDFVGKKDGEAFEGGTANDTDVIIGSGQMIPGFEDGIIGMKKGEQKTITVTFPQDYQNKDLAGAETTFDITVKKIQQAELPEVNDEFVKKFGVKGGVDTFENEIKENMQRELKFILQRKVKDQVFKGLREIAEFETPKSLIKREIDAAKQNLLKQMGGAKGFDVNQLPDNLFEANAKQKVETSLILDSIMNSQEFKAEEAEVESLLDELVQAYEEPEKTKEQIKKNDKEMANLKALVIENKLTDWVLEQAKVTEKTEDFFEVIKENMQAQQAGF</sequence>